<sequence length="339" mass="37166">MKFVDEAFVRVEAGNGGHGCLSFRREKFIPRGGPDGGDGGDGGSVYFVADKSVNTLVEFRYQRLLRAQNGQPGMGRLRSGKKGEDLIVPVPLGTTVYDKETSELIGDLIEAGDKLCVARGGRHGLGNTHFKSSTNRAPRRTTSGEEGEARELKLELKLLADVGLLGLPNAGKSTFIHAVSKATPKIADYPFTTLYPHLGVVRVEEYRSFVIADIPGLIEGASEGAGLGVQFLKHLERTQLLLHIVDIAPLDGSDPVQSIQAIISELEQFSQNLSQKPRWLVFNKIDLLPPDVAQARCQEIINRLNWKGPVYKISAIKRQGTELLCYDLMSFLETNQRSI</sequence>
<evidence type="ECO:0000255" key="1">
    <source>
        <dbReference type="HAMAP-Rule" id="MF_01454"/>
    </source>
</evidence>
<evidence type="ECO:0000255" key="2">
    <source>
        <dbReference type="PROSITE-ProRule" id="PRU01231"/>
    </source>
</evidence>
<evidence type="ECO:0000256" key="3">
    <source>
        <dbReference type="SAM" id="MobiDB-lite"/>
    </source>
</evidence>
<comment type="function">
    <text evidence="1">An essential GTPase which binds GTP, GDP and possibly (p)ppGpp with moderate affinity, with high nucleotide exchange rates and a fairly low GTP hydrolysis rate. Plays a role in control of the cell cycle, stress response, ribosome biogenesis and in those bacteria that undergo differentiation, in morphogenesis control.</text>
</comment>
<comment type="cofactor">
    <cofactor evidence="1">
        <name>Mg(2+)</name>
        <dbReference type="ChEBI" id="CHEBI:18420"/>
    </cofactor>
</comment>
<comment type="subunit">
    <text evidence="1">Monomer.</text>
</comment>
<comment type="subcellular location">
    <subcellularLocation>
        <location evidence="1">Cytoplasm</location>
    </subcellularLocation>
</comment>
<comment type="similarity">
    <text evidence="1">Belongs to the TRAFAC class OBG-HflX-like GTPase superfamily. OBG GTPase family.</text>
</comment>
<protein>
    <recommendedName>
        <fullName evidence="1">GTPase Obg</fullName>
        <ecNumber evidence="1">3.6.5.-</ecNumber>
    </recommendedName>
    <alternativeName>
        <fullName evidence="1">GTP-binding protein Obg</fullName>
    </alternativeName>
</protein>
<name>OBG_COXBN</name>
<proteinExistence type="inferred from homology"/>
<organism>
    <name type="scientific">Coxiella burnetii (strain Dugway 5J108-111)</name>
    <dbReference type="NCBI Taxonomy" id="434922"/>
    <lineage>
        <taxon>Bacteria</taxon>
        <taxon>Pseudomonadati</taxon>
        <taxon>Pseudomonadota</taxon>
        <taxon>Gammaproteobacteria</taxon>
        <taxon>Legionellales</taxon>
        <taxon>Coxiellaceae</taxon>
        <taxon>Coxiella</taxon>
    </lineage>
</organism>
<reference key="1">
    <citation type="journal article" date="2009" name="Infect. Immun.">
        <title>Comparative genomics reveal extensive transposon-mediated genomic plasticity and diversity among potential effector proteins within the genus Coxiella.</title>
        <authorList>
            <person name="Beare P.A."/>
            <person name="Unsworth N."/>
            <person name="Andoh M."/>
            <person name="Voth D.E."/>
            <person name="Omsland A."/>
            <person name="Gilk S.D."/>
            <person name="Williams K.P."/>
            <person name="Sobral B.W."/>
            <person name="Kupko J.J. III"/>
            <person name="Porcella S.F."/>
            <person name="Samuel J.E."/>
            <person name="Heinzen R.A."/>
        </authorList>
    </citation>
    <scope>NUCLEOTIDE SEQUENCE [LARGE SCALE GENOMIC DNA]</scope>
    <source>
        <strain>Dugway 5J108-111</strain>
    </source>
</reference>
<gene>
    <name evidence="1" type="primary">obg</name>
    <name type="ordered locus">CBUD_1681</name>
</gene>
<dbReference type="EC" id="3.6.5.-" evidence="1"/>
<dbReference type="EMBL" id="CP000733">
    <property type="protein sequence ID" value="ABS77358.1"/>
    <property type="molecule type" value="Genomic_DNA"/>
</dbReference>
<dbReference type="SMR" id="A9KEJ7"/>
<dbReference type="KEGG" id="cbd:CBUD_1681"/>
<dbReference type="HOGENOM" id="CLU_011747_2_0_6"/>
<dbReference type="Proteomes" id="UP000008555">
    <property type="component" value="Chromosome"/>
</dbReference>
<dbReference type="GO" id="GO:0005737">
    <property type="term" value="C:cytoplasm"/>
    <property type="evidence" value="ECO:0007669"/>
    <property type="project" value="UniProtKB-SubCell"/>
</dbReference>
<dbReference type="GO" id="GO:0005525">
    <property type="term" value="F:GTP binding"/>
    <property type="evidence" value="ECO:0007669"/>
    <property type="project" value="UniProtKB-UniRule"/>
</dbReference>
<dbReference type="GO" id="GO:0003924">
    <property type="term" value="F:GTPase activity"/>
    <property type="evidence" value="ECO:0007669"/>
    <property type="project" value="UniProtKB-UniRule"/>
</dbReference>
<dbReference type="GO" id="GO:0000287">
    <property type="term" value="F:magnesium ion binding"/>
    <property type="evidence" value="ECO:0007669"/>
    <property type="project" value="InterPro"/>
</dbReference>
<dbReference type="GO" id="GO:0042254">
    <property type="term" value="P:ribosome biogenesis"/>
    <property type="evidence" value="ECO:0007669"/>
    <property type="project" value="UniProtKB-UniRule"/>
</dbReference>
<dbReference type="CDD" id="cd01898">
    <property type="entry name" value="Obg"/>
    <property type="match status" value="1"/>
</dbReference>
<dbReference type="FunFam" id="2.70.210.12:FF:000001">
    <property type="entry name" value="GTPase Obg"/>
    <property type="match status" value="1"/>
</dbReference>
<dbReference type="Gene3D" id="2.70.210.12">
    <property type="entry name" value="GTP1/OBG domain"/>
    <property type="match status" value="1"/>
</dbReference>
<dbReference type="Gene3D" id="3.40.50.300">
    <property type="entry name" value="P-loop containing nucleotide triphosphate hydrolases"/>
    <property type="match status" value="1"/>
</dbReference>
<dbReference type="HAMAP" id="MF_01454">
    <property type="entry name" value="GTPase_Obg"/>
    <property type="match status" value="1"/>
</dbReference>
<dbReference type="InterPro" id="IPR031167">
    <property type="entry name" value="G_OBG"/>
</dbReference>
<dbReference type="InterPro" id="IPR006073">
    <property type="entry name" value="GTP-bd"/>
</dbReference>
<dbReference type="InterPro" id="IPR014100">
    <property type="entry name" value="GTP-bd_Obg/CgtA"/>
</dbReference>
<dbReference type="InterPro" id="IPR006074">
    <property type="entry name" value="GTP1-OBG_CS"/>
</dbReference>
<dbReference type="InterPro" id="IPR006169">
    <property type="entry name" value="GTP1_OBG_dom"/>
</dbReference>
<dbReference type="InterPro" id="IPR036726">
    <property type="entry name" value="GTP1_OBG_dom_sf"/>
</dbReference>
<dbReference type="InterPro" id="IPR045086">
    <property type="entry name" value="OBG_GTPase"/>
</dbReference>
<dbReference type="InterPro" id="IPR027417">
    <property type="entry name" value="P-loop_NTPase"/>
</dbReference>
<dbReference type="NCBIfam" id="TIGR02729">
    <property type="entry name" value="Obg_CgtA"/>
    <property type="match status" value="1"/>
</dbReference>
<dbReference type="NCBIfam" id="NF008955">
    <property type="entry name" value="PRK12297.1"/>
    <property type="match status" value="1"/>
</dbReference>
<dbReference type="NCBIfam" id="NF008956">
    <property type="entry name" value="PRK12299.1"/>
    <property type="match status" value="1"/>
</dbReference>
<dbReference type="PANTHER" id="PTHR11702">
    <property type="entry name" value="DEVELOPMENTALLY REGULATED GTP-BINDING PROTEIN-RELATED"/>
    <property type="match status" value="1"/>
</dbReference>
<dbReference type="PANTHER" id="PTHR11702:SF31">
    <property type="entry name" value="MITOCHONDRIAL RIBOSOME-ASSOCIATED GTPASE 2"/>
    <property type="match status" value="1"/>
</dbReference>
<dbReference type="Pfam" id="PF01018">
    <property type="entry name" value="GTP1_OBG"/>
    <property type="match status" value="1"/>
</dbReference>
<dbReference type="Pfam" id="PF01926">
    <property type="entry name" value="MMR_HSR1"/>
    <property type="match status" value="1"/>
</dbReference>
<dbReference type="PIRSF" id="PIRSF002401">
    <property type="entry name" value="GTP_bd_Obg/CgtA"/>
    <property type="match status" value="1"/>
</dbReference>
<dbReference type="PRINTS" id="PR00326">
    <property type="entry name" value="GTP1OBG"/>
</dbReference>
<dbReference type="SUPFAM" id="SSF82051">
    <property type="entry name" value="Obg GTP-binding protein N-terminal domain"/>
    <property type="match status" value="1"/>
</dbReference>
<dbReference type="SUPFAM" id="SSF52540">
    <property type="entry name" value="P-loop containing nucleoside triphosphate hydrolases"/>
    <property type="match status" value="1"/>
</dbReference>
<dbReference type="PROSITE" id="PS51710">
    <property type="entry name" value="G_OBG"/>
    <property type="match status" value="1"/>
</dbReference>
<dbReference type="PROSITE" id="PS00905">
    <property type="entry name" value="GTP1_OBG"/>
    <property type="match status" value="1"/>
</dbReference>
<dbReference type="PROSITE" id="PS51883">
    <property type="entry name" value="OBG"/>
    <property type="match status" value="1"/>
</dbReference>
<accession>A9KEJ7</accession>
<keyword id="KW-0963">Cytoplasm</keyword>
<keyword id="KW-0342">GTP-binding</keyword>
<keyword id="KW-0378">Hydrolase</keyword>
<keyword id="KW-0460">Magnesium</keyword>
<keyword id="KW-0479">Metal-binding</keyword>
<keyword id="KW-0547">Nucleotide-binding</keyword>
<feature type="chain" id="PRO_0000385866" description="GTPase Obg">
    <location>
        <begin position="1"/>
        <end position="339"/>
    </location>
</feature>
<feature type="domain" description="Obg" evidence="2">
    <location>
        <begin position="1"/>
        <end position="159"/>
    </location>
</feature>
<feature type="domain" description="OBG-type G" evidence="1">
    <location>
        <begin position="160"/>
        <end position="333"/>
    </location>
</feature>
<feature type="region of interest" description="Disordered" evidence="3">
    <location>
        <begin position="127"/>
        <end position="147"/>
    </location>
</feature>
<feature type="binding site" evidence="1">
    <location>
        <begin position="166"/>
        <end position="173"/>
    </location>
    <ligand>
        <name>GTP</name>
        <dbReference type="ChEBI" id="CHEBI:37565"/>
    </ligand>
</feature>
<feature type="binding site" evidence="1">
    <location>
        <position position="173"/>
    </location>
    <ligand>
        <name>Mg(2+)</name>
        <dbReference type="ChEBI" id="CHEBI:18420"/>
    </ligand>
</feature>
<feature type="binding site" evidence="1">
    <location>
        <begin position="191"/>
        <end position="195"/>
    </location>
    <ligand>
        <name>GTP</name>
        <dbReference type="ChEBI" id="CHEBI:37565"/>
    </ligand>
</feature>
<feature type="binding site" evidence="1">
    <location>
        <position position="193"/>
    </location>
    <ligand>
        <name>Mg(2+)</name>
        <dbReference type="ChEBI" id="CHEBI:18420"/>
    </ligand>
</feature>
<feature type="binding site" evidence="1">
    <location>
        <begin position="213"/>
        <end position="216"/>
    </location>
    <ligand>
        <name>GTP</name>
        <dbReference type="ChEBI" id="CHEBI:37565"/>
    </ligand>
</feature>
<feature type="binding site" evidence="1">
    <location>
        <begin position="283"/>
        <end position="286"/>
    </location>
    <ligand>
        <name>GTP</name>
        <dbReference type="ChEBI" id="CHEBI:37565"/>
    </ligand>
</feature>
<feature type="binding site" evidence="1">
    <location>
        <begin position="314"/>
        <end position="316"/>
    </location>
    <ligand>
        <name>GTP</name>
        <dbReference type="ChEBI" id="CHEBI:37565"/>
    </ligand>
</feature>